<reference key="1">
    <citation type="journal article" date="1983" name="J. Mol. Biol.">
        <title>Complete nucleotide sequence of bacteriophage T7 DNA and the locations of T7 genetic elements.</title>
        <authorList>
            <person name="Dunn J.J."/>
            <person name="Studier F.W."/>
        </authorList>
    </citation>
    <scope>NUCLEOTIDE SEQUENCE [LARGE SCALE GENOMIC DNA]</scope>
</reference>
<reference key="2">
    <citation type="submission" date="1993-11" db="EMBL/GenBank/DDBJ databases">
        <authorList>
            <person name="Dunn J.J."/>
        </authorList>
    </citation>
    <scope>SEQUENCE REVISION</scope>
</reference>
<reference key="3">
    <citation type="journal article" date="1990" name="J. Mol. Biol.">
        <title>Role of gene 6 exonuclease in the replication and packaging of bacteriophage T7 DNA.</title>
        <authorList>
            <person name="Serwer P."/>
            <person name="Watson R.H."/>
            <person name="Son M."/>
        </authorList>
    </citation>
    <scope>FUNCTION</scope>
</reference>
<reference key="4">
    <citation type="journal article" date="1992" name="Virology">
        <title>Role of exonuclease in the specificity of bacteriophage T7 DNA packaging.</title>
        <authorList>
            <person name="Son M."/>
            <person name="Serwer P."/>
        </authorList>
    </citation>
    <scope>FUNCTION IN PACKAGING</scope>
</reference>
<comment type="function">
    <text evidence="1 2">Plays an essential role in phage DNA replication by participating in the removal of DNA-linked RNA primers. Participates also in T7 DNA packaging, host DNA degradation and phage genetic recombination.</text>
</comment>
<comment type="catalytic activity">
    <reaction>
        <text>Exonucleolytic cleavage in the 5'- to 3'-direction to yield nucleoside 5'-phosphates.</text>
        <dbReference type="EC" id="3.1.11.3"/>
    </reaction>
</comment>
<gene>
    <name type="ordered locus">6</name>
</gene>
<feature type="chain" id="PRO_0000106505" description="Exonuclease">
    <location>
        <begin position="1"/>
        <end position="300"/>
    </location>
</feature>
<evidence type="ECO:0000269" key="1">
    <source>
    </source>
</evidence>
<evidence type="ECO:0000269" key="2">
    <source>
    </source>
</evidence>
<keyword id="KW-1261">Bacterial host gene expression shutoff by virus</keyword>
<keyword id="KW-1247">Degradation of host chromosome by virus</keyword>
<keyword id="KW-0269">Exonuclease</keyword>
<keyword id="KW-1190">Host gene expression shutoff by virus</keyword>
<keyword id="KW-0945">Host-virus interaction</keyword>
<keyword id="KW-0378">Hydrolase</keyword>
<keyword id="KW-0540">Nuclease</keyword>
<keyword id="KW-1185">Reference proteome</keyword>
<accession>P00638</accession>
<organism>
    <name type="scientific">Escherichia phage T7</name>
    <name type="common">Bacteriophage T7</name>
    <dbReference type="NCBI Taxonomy" id="10760"/>
    <lineage>
        <taxon>Viruses</taxon>
        <taxon>Duplodnaviria</taxon>
        <taxon>Heunggongvirae</taxon>
        <taxon>Uroviricota</taxon>
        <taxon>Caudoviricetes</taxon>
        <taxon>Autographiviridae</taxon>
        <taxon>Studiervirinae</taxon>
        <taxon>Teseptimavirus</taxon>
        <taxon>Teseptimavirus T7</taxon>
    </lineage>
</organism>
<sequence length="300" mass="34502">MALLDLKQFYELREGCDDKGILVMDGDWLVFQAMSAAEFDASWEEEIWHRCCDHAKARQILEDSIKSYETRKKAWAGAPIVLAFTDSVNWRKELVDPNYKANRKAVKKPVGYFEFLDALFEREEFYCIREPMLEGDDVMGVIASNPSAFGARKAVIISCDKDFKTIPNCDFLWCTTGNILTQTEESADWWHLFQTIKGDITDGYSGIAGWGDTAEDFLNNPFITEPKTSVLKSGKNKGQEVTKWVKRDPEPHETLWDCIKSIGAKAGMTEEDIIKQGQMARILRFNEYNFIDKEIYLWRP</sequence>
<protein>
    <recommendedName>
        <fullName>Exonuclease</fullName>
    </recommendedName>
    <alternativeName>
        <fullName>Exonuclease gp6</fullName>
    </alternativeName>
    <alternativeName>
        <fullName>Gene product 6</fullName>
        <shortName>Gp6</shortName>
        <ecNumber>3.1.11.3</ecNumber>
    </alternativeName>
</protein>
<proteinExistence type="evidence at protein level"/>
<dbReference type="EC" id="3.1.11.3"/>
<dbReference type="EMBL" id="V01146">
    <property type="protein sequence ID" value="CAA24418.1"/>
    <property type="molecule type" value="Genomic_DNA"/>
</dbReference>
<dbReference type="PIR" id="S42316">
    <property type="entry name" value="NDBPT7"/>
</dbReference>
<dbReference type="RefSeq" id="NP_041988.1">
    <property type="nucleotide sequence ID" value="NC_001604.1"/>
</dbReference>
<dbReference type="KEGG" id="vg:1261052"/>
<dbReference type="OrthoDB" id="6588at10239"/>
<dbReference type="Proteomes" id="UP000000840">
    <property type="component" value="Genome"/>
</dbReference>
<dbReference type="GO" id="GO:0003677">
    <property type="term" value="F:DNA binding"/>
    <property type="evidence" value="ECO:0007669"/>
    <property type="project" value="InterPro"/>
</dbReference>
<dbReference type="GO" id="GO:0051908">
    <property type="term" value="F:double-stranded DNA 5'-3' DNA exonuclease activity"/>
    <property type="evidence" value="ECO:0007669"/>
    <property type="project" value="UniProtKB-EC"/>
</dbReference>
<dbReference type="GO" id="GO:0004523">
    <property type="term" value="F:RNA-DNA hybrid ribonuclease activity"/>
    <property type="evidence" value="ECO:0000314"/>
    <property type="project" value="UniProtKB"/>
</dbReference>
<dbReference type="GO" id="GO:0099015">
    <property type="term" value="P:degradation of host chromosome by virus"/>
    <property type="evidence" value="ECO:0007669"/>
    <property type="project" value="UniProtKB-KW"/>
</dbReference>
<dbReference type="GO" id="GO:0039657">
    <property type="term" value="P:symbiont-mediated suppression of host gene expression"/>
    <property type="evidence" value="ECO:0007669"/>
    <property type="project" value="UniProtKB-KW"/>
</dbReference>
<dbReference type="FunFam" id="3.40.50.1010:FF:000085">
    <property type="entry name" value="Exonuclease"/>
    <property type="match status" value="1"/>
</dbReference>
<dbReference type="Gene3D" id="3.40.50.1010">
    <property type="entry name" value="5'-nuclease"/>
    <property type="match status" value="1"/>
</dbReference>
<dbReference type="InterPro" id="IPR020046">
    <property type="entry name" value="5-3_exonucl_a-hlix_arch_N"/>
</dbReference>
<dbReference type="InterPro" id="IPR029060">
    <property type="entry name" value="PIN-like_dom_sf"/>
</dbReference>
<dbReference type="Pfam" id="PF02739">
    <property type="entry name" value="5_3_exonuc_N"/>
    <property type="match status" value="1"/>
</dbReference>
<dbReference type="SUPFAM" id="SSF88723">
    <property type="entry name" value="PIN domain-like"/>
    <property type="match status" value="1"/>
</dbReference>
<organismHost>
    <name type="scientific">Escherichia coli</name>
    <dbReference type="NCBI Taxonomy" id="562"/>
</organismHost>
<name>EXRN_BPT7</name>